<reference key="1">
    <citation type="journal article" date="2011" name="MBio">
        <title>Novel metabolic attributes of the genus Cyanothece, comprising a group of unicellular nitrogen-fixing Cyanobacteria.</title>
        <authorList>
            <person name="Bandyopadhyay A."/>
            <person name="Elvitigala T."/>
            <person name="Welsh E."/>
            <person name="Stockel J."/>
            <person name="Liberton M."/>
            <person name="Min H."/>
            <person name="Sherman L.A."/>
            <person name="Pakrasi H.B."/>
        </authorList>
    </citation>
    <scope>NUCLEOTIDE SEQUENCE [LARGE SCALE GENOMIC DNA]</scope>
    <source>
        <strain>PCC 7424</strain>
    </source>
</reference>
<sequence length="210" mass="23258">MVNCVVKNWQGDEVGQTSLELKVAKEETASHILHRAVVRHLANARQGNASTKTRAEVRGGGRKPWRQKGTGRARAGSNRSPLWRGGGVIFGPKPRDYSQKMNRKERRLALRTALNSKAENLIIVENFAPELPQPKTKELALALTRWGVTEKDKVLLILSEIPENISLSARNICNVKLIRADSINVYDILSASKLVATSDALAKILEVYSD</sequence>
<accession>B7KHY8</accession>
<protein>
    <recommendedName>
        <fullName evidence="1">Large ribosomal subunit protein uL4</fullName>
    </recommendedName>
    <alternativeName>
        <fullName evidence="3">50S ribosomal protein L4</fullName>
    </alternativeName>
</protein>
<organism>
    <name type="scientific">Gloeothece citriformis (strain PCC 7424)</name>
    <name type="common">Cyanothece sp. (strain PCC 7424)</name>
    <dbReference type="NCBI Taxonomy" id="65393"/>
    <lineage>
        <taxon>Bacteria</taxon>
        <taxon>Bacillati</taxon>
        <taxon>Cyanobacteriota</taxon>
        <taxon>Cyanophyceae</taxon>
        <taxon>Oscillatoriophycideae</taxon>
        <taxon>Chroococcales</taxon>
        <taxon>Aphanothecaceae</taxon>
        <taxon>Gloeothece</taxon>
        <taxon>Gloeothece citriformis</taxon>
    </lineage>
</organism>
<name>RL4_GLOC7</name>
<gene>
    <name evidence="1" type="primary">rplD</name>
    <name evidence="1" type="synonym">rpl4</name>
    <name type="ordered locus">PCC7424_3704</name>
</gene>
<comment type="function">
    <text evidence="1">One of the primary rRNA binding proteins, this protein initially binds near the 5'-end of the 23S rRNA. It is important during the early stages of 50S assembly. It makes multiple contacts with different domains of the 23S rRNA in the assembled 50S subunit and ribosome.</text>
</comment>
<comment type="function">
    <text evidence="1">Forms part of the polypeptide exit tunnel.</text>
</comment>
<comment type="subunit">
    <text evidence="1">Part of the 50S ribosomal subunit.</text>
</comment>
<comment type="similarity">
    <text evidence="1">Belongs to the universal ribosomal protein uL4 family.</text>
</comment>
<keyword id="KW-1185">Reference proteome</keyword>
<keyword id="KW-0687">Ribonucleoprotein</keyword>
<keyword id="KW-0689">Ribosomal protein</keyword>
<keyword id="KW-0694">RNA-binding</keyword>
<keyword id="KW-0699">rRNA-binding</keyword>
<feature type="chain" id="PRO_1000142110" description="Large ribosomal subunit protein uL4">
    <location>
        <begin position="1"/>
        <end position="210"/>
    </location>
</feature>
<feature type="region of interest" description="Disordered" evidence="2">
    <location>
        <begin position="46"/>
        <end position="96"/>
    </location>
</feature>
<feature type="compositionally biased region" description="Basic residues" evidence="2">
    <location>
        <begin position="60"/>
        <end position="71"/>
    </location>
</feature>
<evidence type="ECO:0000255" key="1">
    <source>
        <dbReference type="HAMAP-Rule" id="MF_01328"/>
    </source>
</evidence>
<evidence type="ECO:0000256" key="2">
    <source>
        <dbReference type="SAM" id="MobiDB-lite"/>
    </source>
</evidence>
<evidence type="ECO:0000305" key="3"/>
<proteinExistence type="inferred from homology"/>
<dbReference type="EMBL" id="CP001291">
    <property type="protein sequence ID" value="ACK72085.1"/>
    <property type="molecule type" value="Genomic_DNA"/>
</dbReference>
<dbReference type="RefSeq" id="WP_015955678.1">
    <property type="nucleotide sequence ID" value="NC_011729.1"/>
</dbReference>
<dbReference type="SMR" id="B7KHY8"/>
<dbReference type="STRING" id="65393.PCC7424_3704"/>
<dbReference type="KEGG" id="cyc:PCC7424_3704"/>
<dbReference type="eggNOG" id="COG0088">
    <property type="taxonomic scope" value="Bacteria"/>
</dbReference>
<dbReference type="HOGENOM" id="CLU_041575_5_2_3"/>
<dbReference type="OrthoDB" id="9803201at2"/>
<dbReference type="Proteomes" id="UP000002384">
    <property type="component" value="Chromosome"/>
</dbReference>
<dbReference type="GO" id="GO:1990904">
    <property type="term" value="C:ribonucleoprotein complex"/>
    <property type="evidence" value="ECO:0007669"/>
    <property type="project" value="UniProtKB-KW"/>
</dbReference>
<dbReference type="GO" id="GO:0005840">
    <property type="term" value="C:ribosome"/>
    <property type="evidence" value="ECO:0007669"/>
    <property type="project" value="UniProtKB-KW"/>
</dbReference>
<dbReference type="GO" id="GO:0019843">
    <property type="term" value="F:rRNA binding"/>
    <property type="evidence" value="ECO:0007669"/>
    <property type="project" value="UniProtKB-UniRule"/>
</dbReference>
<dbReference type="GO" id="GO:0003735">
    <property type="term" value="F:structural constituent of ribosome"/>
    <property type="evidence" value="ECO:0007669"/>
    <property type="project" value="InterPro"/>
</dbReference>
<dbReference type="GO" id="GO:0006412">
    <property type="term" value="P:translation"/>
    <property type="evidence" value="ECO:0007669"/>
    <property type="project" value="UniProtKB-UniRule"/>
</dbReference>
<dbReference type="Gene3D" id="3.40.1370.10">
    <property type="match status" value="1"/>
</dbReference>
<dbReference type="HAMAP" id="MF_01328_B">
    <property type="entry name" value="Ribosomal_uL4_B"/>
    <property type="match status" value="1"/>
</dbReference>
<dbReference type="InterPro" id="IPR002136">
    <property type="entry name" value="Ribosomal_uL4"/>
</dbReference>
<dbReference type="InterPro" id="IPR013005">
    <property type="entry name" value="Ribosomal_uL4-like"/>
</dbReference>
<dbReference type="InterPro" id="IPR023574">
    <property type="entry name" value="Ribosomal_uL4_dom_sf"/>
</dbReference>
<dbReference type="NCBIfam" id="TIGR03953">
    <property type="entry name" value="rplD_bact"/>
    <property type="match status" value="1"/>
</dbReference>
<dbReference type="PANTHER" id="PTHR10746">
    <property type="entry name" value="50S RIBOSOMAL PROTEIN L4"/>
    <property type="match status" value="1"/>
</dbReference>
<dbReference type="PANTHER" id="PTHR10746:SF17">
    <property type="entry name" value="LARGE RIBOSOMAL SUBUNIT PROTEIN UL4C"/>
    <property type="match status" value="1"/>
</dbReference>
<dbReference type="Pfam" id="PF00573">
    <property type="entry name" value="Ribosomal_L4"/>
    <property type="match status" value="1"/>
</dbReference>
<dbReference type="SUPFAM" id="SSF52166">
    <property type="entry name" value="Ribosomal protein L4"/>
    <property type="match status" value="1"/>
</dbReference>